<keyword id="KW-0025">Alternative splicing</keyword>
<keyword id="KW-0472">Membrane</keyword>
<keyword id="KW-0488">Methylation</keyword>
<keyword id="KW-0597">Phosphoprotein</keyword>
<keyword id="KW-1185">Reference proteome</keyword>
<gene>
    <name type="primary">Dlgap4</name>
    <name type="synonym">Kiaa0964</name>
    <name type="synonym">Sapap4</name>
</gene>
<evidence type="ECO:0000250" key="1"/>
<evidence type="ECO:0000250" key="2">
    <source>
        <dbReference type="UniProtKB" id="P97839"/>
    </source>
</evidence>
<evidence type="ECO:0000256" key="3">
    <source>
        <dbReference type="SAM" id="MobiDB-lite"/>
    </source>
</evidence>
<evidence type="ECO:0000303" key="4">
    <source>
    </source>
</evidence>
<evidence type="ECO:0000303" key="5">
    <source>
    </source>
</evidence>
<evidence type="ECO:0000305" key="6"/>
<evidence type="ECO:0007744" key="7">
    <source>
    </source>
</evidence>
<evidence type="ECO:0007744" key="8">
    <source>
    </source>
</evidence>
<evidence type="ECO:0007744" key="9">
    <source>
    </source>
</evidence>
<sequence length="992" mass="108037">MKGLGDSRPRHLSDSLDPPHEPLFAGPDRNPYLLSPTEAFAREARFPGQNTLPGDGLFPLNNQLPPPSSTFPRIHYNSHFEVPEESPFPSHAQATKINRLPANLLDQFEKQLPIHRDGFSTLQFPRGEAKARGESPGRIRHLVHSVQRLFFTKAPSMEGTAGKVGGNGSKKGGLEDGKGRRAKSKERAKAGEPKRRSRSNISGWWSSDDNLDGEGGAFRSGPASGLMTLGRQQERTQPRYFMHAYNTISGHMLKTTKNTTTELTAPPPPPAPPATCPSLGVGTDTNYVKRGSWSTLTLSHAHEVCQKTSATLDKSLLKSKSCHQGLAYHYLQVPGGGGEWSTTLLSPRDMDSTAEGPIPCRRMRSGSYIKAMGDEDSDESGGGSPKPSPKTAARRQSYLRATQQSLGEQSNPRRSLDRLDSVDMLLPSKCPSWEDDYNPISDSLNDSSCISQVFGQASLIPQLFGHDQQVREADLSDQYEAACESACSEAESTTAEALDLPLPSYFRSRSHSYLRAIQAGCSQEEDSVSLQSLSPPPSTGSLSNSRTLPSSSCLVAYKKTPPPVPPRTTSKPFISVTVQSSTESAQDTYLDSQDHKSEVTSQSGLSNSSDSLDSSTRPPSVTRGGITPGPEAPEPPPKHAALKSEQGTLTSSESHSEAIPKRKLSSIGIQVDCIQPVPKEEPSPATKFQSIGIQVEDDWRSSAPSHSMSSRRDTDSDTQDANDSSCKSSERSLPDCTSHPNSISIDAGPRQAPKIAQIKRNLSYGDNSDPALEASSLPPPDPWLETSSSSPAEPAQPGACRRDGYWFLKLLQAETERLEGWCCQMDKETKENNLSEEVLGKVLSAVGSAQLLMSQKFQQFRGLCEQNLNPDANPRPTAQDLAGFWDLLQLSIEDISMKFDELYHLKANSWQLVETPEKRKEEKKPPPPVPKKPAKSKAAVSRDKASDAGDKQRQEARKRLLAAKRAASVRQNSATESADSIEIYVPEAQTRL</sequence>
<dbReference type="EMBL" id="AK122408">
    <property type="protein sequence ID" value="BAC65690.2"/>
    <property type="status" value="ALT_SEQ"/>
    <property type="molecule type" value="Transcribed_RNA"/>
</dbReference>
<dbReference type="EMBL" id="AY243849">
    <property type="protein sequence ID" value="AAO89220.2"/>
    <property type="molecule type" value="mRNA"/>
</dbReference>
<dbReference type="EMBL" id="BX004793">
    <property type="status" value="NOT_ANNOTATED_CDS"/>
    <property type="molecule type" value="Genomic_DNA"/>
</dbReference>
<dbReference type="EMBL" id="BX571766">
    <property type="status" value="NOT_ANNOTATED_CDS"/>
    <property type="molecule type" value="Genomic_DNA"/>
</dbReference>
<dbReference type="EMBL" id="BC024558">
    <property type="protein sequence ID" value="AAH24558.1"/>
    <property type="molecule type" value="mRNA"/>
</dbReference>
<dbReference type="EMBL" id="BC058948">
    <property type="protein sequence ID" value="AAH58948.1"/>
    <property type="molecule type" value="mRNA"/>
</dbReference>
<dbReference type="EMBL" id="BC085475">
    <property type="protein sequence ID" value="AAH85475.1"/>
    <property type="molecule type" value="mRNA"/>
</dbReference>
<dbReference type="EMBL" id="BC106094">
    <property type="protein sequence ID" value="AAI06095.1"/>
    <property type="molecule type" value="mRNA"/>
</dbReference>
<dbReference type="EMBL" id="BC141110">
    <property type="protein sequence ID" value="AAI41111.1"/>
    <property type="molecule type" value="mRNA"/>
</dbReference>
<dbReference type="EMBL" id="BC145394">
    <property type="protein sequence ID" value="AAI45395.1"/>
    <property type="molecule type" value="mRNA"/>
</dbReference>
<dbReference type="CCDS" id="CCDS16968.1">
    <molecule id="B1AZP2-1"/>
</dbReference>
<dbReference type="CCDS" id="CCDS38299.1">
    <molecule id="B1AZP2-3"/>
</dbReference>
<dbReference type="CCDS" id="CCDS71171.1">
    <molecule id="B1AZP2-2"/>
</dbReference>
<dbReference type="RefSeq" id="NP_001035952.1">
    <molecule id="B1AZP2-3"/>
    <property type="nucleotide sequence ID" value="NM_001042487.1"/>
</dbReference>
<dbReference type="RefSeq" id="NP_001035953.1">
    <property type="nucleotide sequence ID" value="NM_001042488.2"/>
</dbReference>
<dbReference type="RefSeq" id="NP_001264115.1">
    <molecule id="B1AZP2-2"/>
    <property type="nucleotide sequence ID" value="NM_001277186.1"/>
</dbReference>
<dbReference type="RefSeq" id="NP_001264116.1">
    <property type="nucleotide sequence ID" value="NM_001277187.1"/>
</dbReference>
<dbReference type="RefSeq" id="NP_666240.4">
    <molecule id="B1AZP2-1"/>
    <property type="nucleotide sequence ID" value="NM_146128.6"/>
</dbReference>
<dbReference type="RefSeq" id="XP_006499403.1">
    <molecule id="B1AZP2-1"/>
    <property type="nucleotide sequence ID" value="XM_006499340.5"/>
</dbReference>
<dbReference type="RefSeq" id="XP_036017435.1">
    <molecule id="B1AZP2-1"/>
    <property type="nucleotide sequence ID" value="XM_036161542.1"/>
</dbReference>
<dbReference type="RefSeq" id="XP_036017439.1">
    <molecule id="B1AZP2-2"/>
    <property type="nucleotide sequence ID" value="XM_036161546.1"/>
</dbReference>
<dbReference type="SMR" id="B1AZP2"/>
<dbReference type="BioGRID" id="230780">
    <property type="interactions" value="21"/>
</dbReference>
<dbReference type="FunCoup" id="B1AZP2">
    <property type="interactions" value="620"/>
</dbReference>
<dbReference type="IntAct" id="B1AZP2">
    <property type="interactions" value="12"/>
</dbReference>
<dbReference type="STRING" id="10090.ENSMUSP00000126980"/>
<dbReference type="GlyGen" id="B1AZP2">
    <property type="glycosylation" value="6 sites, 2 N-linked glycans (2 sites), 1 O-linked glycan (3 sites)"/>
</dbReference>
<dbReference type="iPTMnet" id="B1AZP2"/>
<dbReference type="PhosphoSitePlus" id="B1AZP2"/>
<dbReference type="SwissPalm" id="B1AZP2"/>
<dbReference type="jPOST" id="B1AZP2"/>
<dbReference type="PaxDb" id="10090-ENSMUSP00000126980"/>
<dbReference type="ProteomicsDB" id="279424">
    <molecule id="B1AZP2-1"/>
</dbReference>
<dbReference type="ProteomicsDB" id="279425">
    <molecule id="B1AZP2-2"/>
</dbReference>
<dbReference type="ProteomicsDB" id="279426">
    <molecule id="B1AZP2-3"/>
</dbReference>
<dbReference type="Pumba" id="B1AZP2"/>
<dbReference type="Antibodypedia" id="26505">
    <property type="antibodies" value="121 antibodies from 27 providers"/>
</dbReference>
<dbReference type="Ensembl" id="ENSMUST00000070782.13">
    <molecule id="B1AZP2-2"/>
    <property type="protein sequence ID" value="ENSMUSP00000068745.7"/>
    <property type="gene ID" value="ENSMUSG00000061689.16"/>
</dbReference>
<dbReference type="Ensembl" id="ENSMUST00000099145.6">
    <molecule id="B1AZP2-3"/>
    <property type="protein sequence ID" value="ENSMUSP00000096749.6"/>
    <property type="gene ID" value="ENSMUSG00000061689.16"/>
</dbReference>
<dbReference type="Ensembl" id="ENSMUST00000109567.10">
    <molecule id="B1AZP2-2"/>
    <property type="protein sequence ID" value="ENSMUSP00000105195.4"/>
    <property type="gene ID" value="ENSMUSG00000061689.16"/>
</dbReference>
<dbReference type="Ensembl" id="ENSMUST00000169464.9">
    <molecule id="B1AZP2-1"/>
    <property type="protein sequence ID" value="ENSMUSP00000126980.3"/>
    <property type="gene ID" value="ENSMUSG00000061689.16"/>
</dbReference>
<dbReference type="GeneID" id="228836"/>
<dbReference type="KEGG" id="mmu:228836"/>
<dbReference type="UCSC" id="uc008nnr.2">
    <molecule id="B1AZP2-1"/>
    <property type="organism name" value="mouse"/>
</dbReference>
<dbReference type="UCSC" id="uc008nnv.1">
    <molecule id="B1AZP2-3"/>
    <property type="organism name" value="mouse"/>
</dbReference>
<dbReference type="UCSC" id="uc012chv.2">
    <molecule id="B1AZP2-2"/>
    <property type="organism name" value="mouse"/>
</dbReference>
<dbReference type="AGR" id="MGI:2138865"/>
<dbReference type="CTD" id="22839"/>
<dbReference type="MGI" id="MGI:2138865">
    <property type="gene designation" value="Dlgap4"/>
</dbReference>
<dbReference type="VEuPathDB" id="HostDB:ENSMUSG00000061689"/>
<dbReference type="eggNOG" id="KOG3971">
    <property type="taxonomic scope" value="Eukaryota"/>
</dbReference>
<dbReference type="GeneTree" id="ENSGT00940000155308"/>
<dbReference type="HOGENOM" id="CLU_010880_3_0_1"/>
<dbReference type="InParanoid" id="B1AZP2"/>
<dbReference type="OMA" id="QIFSHEE"/>
<dbReference type="OrthoDB" id="10036956at2759"/>
<dbReference type="PhylomeDB" id="B1AZP2"/>
<dbReference type="TreeFam" id="TF321382"/>
<dbReference type="Reactome" id="R-MMU-6794361">
    <property type="pathway name" value="Neurexins and neuroligins"/>
</dbReference>
<dbReference type="BioGRID-ORCS" id="228836">
    <property type="hits" value="6 hits in 73 CRISPR screens"/>
</dbReference>
<dbReference type="CD-CODE" id="CE726F99">
    <property type="entry name" value="Postsynaptic density"/>
</dbReference>
<dbReference type="ChiTaRS" id="Dlgap4">
    <property type="organism name" value="mouse"/>
</dbReference>
<dbReference type="PRO" id="PR:B1AZP2"/>
<dbReference type="Proteomes" id="UP000000589">
    <property type="component" value="Chromosome 2"/>
</dbReference>
<dbReference type="RNAct" id="B1AZP2">
    <property type="molecule type" value="protein"/>
</dbReference>
<dbReference type="Bgee" id="ENSMUSG00000061689">
    <property type="expression patterns" value="Expressed in cortical plate and 270 other cell types or tissues"/>
</dbReference>
<dbReference type="ExpressionAtlas" id="B1AZP2">
    <property type="expression patterns" value="baseline and differential"/>
</dbReference>
<dbReference type="GO" id="GO:0098981">
    <property type="term" value="C:cholinergic synapse"/>
    <property type="evidence" value="ECO:0000314"/>
    <property type="project" value="SynGO"/>
</dbReference>
<dbReference type="GO" id="GO:0098978">
    <property type="term" value="C:glutamatergic synapse"/>
    <property type="evidence" value="ECO:0000314"/>
    <property type="project" value="SynGO"/>
</dbReference>
<dbReference type="GO" id="GO:0016020">
    <property type="term" value="C:membrane"/>
    <property type="evidence" value="ECO:0007669"/>
    <property type="project" value="UniProtKB-SubCell"/>
</dbReference>
<dbReference type="GO" id="GO:0031594">
    <property type="term" value="C:neuromuscular junction"/>
    <property type="evidence" value="ECO:0000314"/>
    <property type="project" value="SynGO"/>
</dbReference>
<dbReference type="GO" id="GO:0099572">
    <property type="term" value="C:postsynaptic specialization"/>
    <property type="evidence" value="ECO:0000314"/>
    <property type="project" value="SynGO"/>
</dbReference>
<dbReference type="GO" id="GO:0045202">
    <property type="term" value="C:synapse"/>
    <property type="evidence" value="ECO:0000314"/>
    <property type="project" value="MGI"/>
</dbReference>
<dbReference type="GO" id="GO:0099010">
    <property type="term" value="P:modification of postsynaptic structure"/>
    <property type="evidence" value="ECO:0000314"/>
    <property type="project" value="SynGO"/>
</dbReference>
<dbReference type="GO" id="GO:0090128">
    <property type="term" value="P:regulation of synapse maturation"/>
    <property type="evidence" value="ECO:0000314"/>
    <property type="project" value="SynGO"/>
</dbReference>
<dbReference type="GO" id="GO:0023052">
    <property type="term" value="P:signaling"/>
    <property type="evidence" value="ECO:0007669"/>
    <property type="project" value="InterPro"/>
</dbReference>
<dbReference type="InterPro" id="IPR005026">
    <property type="entry name" value="SAPAP"/>
</dbReference>
<dbReference type="PANTHER" id="PTHR12353:SF19">
    <property type="entry name" value="DISKS LARGE-ASSOCIATED PROTEIN 4"/>
    <property type="match status" value="1"/>
</dbReference>
<dbReference type="PANTHER" id="PTHR12353">
    <property type="entry name" value="DISKS LARGE-ASSOCIATED PROTEIN DAP SAP90/PSD-95-ASSOCIATED PROTEIN"/>
    <property type="match status" value="1"/>
</dbReference>
<dbReference type="Pfam" id="PF03359">
    <property type="entry name" value="GKAP"/>
    <property type="match status" value="1"/>
</dbReference>
<name>DLGP4_MOUSE</name>
<organism>
    <name type="scientific">Mus musculus</name>
    <name type="common">Mouse</name>
    <dbReference type="NCBI Taxonomy" id="10090"/>
    <lineage>
        <taxon>Eukaryota</taxon>
        <taxon>Metazoa</taxon>
        <taxon>Chordata</taxon>
        <taxon>Craniata</taxon>
        <taxon>Vertebrata</taxon>
        <taxon>Euteleostomi</taxon>
        <taxon>Mammalia</taxon>
        <taxon>Eutheria</taxon>
        <taxon>Euarchontoglires</taxon>
        <taxon>Glires</taxon>
        <taxon>Rodentia</taxon>
        <taxon>Myomorpha</taxon>
        <taxon>Muroidea</taxon>
        <taxon>Muridae</taxon>
        <taxon>Murinae</taxon>
        <taxon>Mus</taxon>
        <taxon>Mus</taxon>
    </lineage>
</organism>
<protein>
    <recommendedName>
        <fullName>Disks large-associated protein 4</fullName>
        <shortName>DAP-4</shortName>
    </recommendedName>
    <alternativeName>
        <fullName>PSD-95/SAP90-binding protein 4</fullName>
    </alternativeName>
    <alternativeName>
        <fullName>SAP90/PSD-95-associated protein 4</fullName>
        <shortName>SAPAP-4</shortName>
    </alternativeName>
</protein>
<feature type="chain" id="PRO_0000345018" description="Disks large-associated protein 4">
    <location>
        <begin position="1"/>
        <end position="992"/>
    </location>
</feature>
<feature type="region of interest" description="Disordered" evidence="3">
    <location>
        <begin position="1"/>
        <end position="31"/>
    </location>
</feature>
<feature type="region of interest" description="Disordered" evidence="3">
    <location>
        <begin position="157"/>
        <end position="225"/>
    </location>
</feature>
<feature type="region of interest" description="Disordered" evidence="3">
    <location>
        <begin position="342"/>
        <end position="396"/>
    </location>
</feature>
<feature type="region of interest" description="Disordered" evidence="3">
    <location>
        <begin position="527"/>
        <end position="751"/>
    </location>
</feature>
<feature type="region of interest" description="Disordered" evidence="3">
    <location>
        <begin position="763"/>
        <end position="798"/>
    </location>
</feature>
<feature type="region of interest" description="Disordered" evidence="3">
    <location>
        <begin position="915"/>
        <end position="992"/>
    </location>
</feature>
<feature type="compositionally biased region" description="Basic and acidic residues" evidence="3">
    <location>
        <begin position="1"/>
        <end position="20"/>
    </location>
</feature>
<feature type="compositionally biased region" description="Gly residues" evidence="3">
    <location>
        <begin position="162"/>
        <end position="171"/>
    </location>
</feature>
<feature type="compositionally biased region" description="Basic and acidic residues" evidence="3">
    <location>
        <begin position="172"/>
        <end position="194"/>
    </location>
</feature>
<feature type="compositionally biased region" description="Polar residues" evidence="3">
    <location>
        <begin position="199"/>
        <end position="208"/>
    </location>
</feature>
<feature type="compositionally biased region" description="Low complexity" evidence="3">
    <location>
        <begin position="528"/>
        <end position="554"/>
    </location>
</feature>
<feature type="compositionally biased region" description="Polar residues" evidence="3">
    <location>
        <begin position="576"/>
        <end position="591"/>
    </location>
</feature>
<feature type="compositionally biased region" description="Low complexity" evidence="3">
    <location>
        <begin position="600"/>
        <end position="620"/>
    </location>
</feature>
<feature type="compositionally biased region" description="Basic and acidic residues" evidence="3">
    <location>
        <begin position="915"/>
        <end position="925"/>
    </location>
</feature>
<feature type="compositionally biased region" description="Basic and acidic residues" evidence="3">
    <location>
        <begin position="940"/>
        <end position="958"/>
    </location>
</feature>
<feature type="compositionally biased region" description="Polar residues" evidence="3">
    <location>
        <begin position="969"/>
        <end position="978"/>
    </location>
</feature>
<feature type="modified residue" description="Phosphoserine" evidence="2">
    <location>
        <position position="206"/>
    </location>
</feature>
<feature type="modified residue" description="Phosphoserine" evidence="8">
    <location>
        <position position="207"/>
    </location>
</feature>
<feature type="modified residue" description="Omega-N-methylarginine" evidence="9">
    <location>
        <position position="290"/>
    </location>
</feature>
<feature type="modified residue" description="Phosphoserine" evidence="7">
    <location>
        <position position="377"/>
    </location>
</feature>
<feature type="modified residue" description="Phosphoserine" evidence="2">
    <location>
        <position position="380"/>
    </location>
</feature>
<feature type="modified residue" description="Phosphoserine" evidence="8">
    <location>
        <position position="384"/>
    </location>
</feature>
<feature type="modified residue" description="Phosphoserine" evidence="8">
    <location>
        <position position="388"/>
    </location>
</feature>
<feature type="modified residue" description="Phosphoserine" evidence="8">
    <location>
        <position position="405"/>
    </location>
</feature>
<feature type="modified residue" description="Phosphoserine" evidence="8">
    <location>
        <position position="415"/>
    </location>
</feature>
<feature type="modified residue" description="Phosphoserine" evidence="8">
    <location>
        <position position="421"/>
    </location>
</feature>
<feature type="modified residue" description="Phosphoserine" evidence="8">
    <location>
        <position position="580"/>
    </location>
</feature>
<feature type="modified residue" description="Phosphoserine" evidence="8">
    <location>
        <position position="581"/>
    </location>
</feature>
<feature type="modified residue" description="Phosphoserine" evidence="8">
    <location>
        <position position="609"/>
    </location>
</feature>
<feature type="modified residue" description="Phosphoserine" evidence="8">
    <location>
        <position position="611"/>
    </location>
</feature>
<feature type="modified residue" description="Phosphoserine" evidence="8">
    <location>
        <position position="665"/>
    </location>
</feature>
<feature type="modified residue" description="Phosphoserine" evidence="8">
    <location>
        <position position="744"/>
    </location>
</feature>
<feature type="modified residue" description="Phosphothreonine" evidence="8">
    <location>
        <position position="915"/>
    </location>
</feature>
<feature type="modified residue" description="Phosphoserine" evidence="8">
    <location>
        <position position="973"/>
    </location>
</feature>
<feature type="splice variant" id="VSP_034907" description="In isoform 3." evidence="5">
    <location>
        <begin position="1"/>
        <end position="539"/>
    </location>
</feature>
<feature type="splice variant" id="VSP_034908" description="In isoform 3." evidence="5">
    <original>GSLSNSRTLPS</original>
    <variation>MALCLELLKQC</variation>
    <location>
        <begin position="540"/>
        <end position="550"/>
    </location>
</feature>
<feature type="splice variant" id="VSP_034909" description="In isoform 2." evidence="4 5">
    <original>VDCIQPVPKEEPSPATKFQSIGIQVEDDWR</original>
    <variation>ERTRRSGSHLSEDNGPKAIDVMAPSSE</variation>
    <location>
        <begin position="671"/>
        <end position="700"/>
    </location>
</feature>
<feature type="sequence conflict" description="In Ref. 4; AAH24558." evidence="6" ref="4">
    <original>S</original>
    <variation>N</variation>
    <location>
        <position position="614"/>
    </location>
</feature>
<feature type="sequence conflict" description="In Ref. 1; AAO89220." evidence="6" ref="1">
    <location>
        <position position="676"/>
    </location>
</feature>
<feature type="sequence conflict" description="In Ref. 1; AAO89220." evidence="6" ref="1">
    <original>Q</original>
    <variation>E</variation>
    <location>
        <position position="689"/>
    </location>
</feature>
<feature type="sequence conflict" description="In Ref. 1; AAO89220 and 4; AAH24558/AAI06095." evidence="6" ref="1 4">
    <original>I</original>
    <variation>V</variation>
    <location>
        <position position="693"/>
    </location>
</feature>
<feature type="sequence conflict" description="In Ref. 4; AAH24558." evidence="6" ref="4">
    <original>A</original>
    <variation>V</variation>
    <location>
        <position position="774"/>
    </location>
</feature>
<comment type="function">
    <text evidence="1">May play a role in the molecular organization of synapses and neuronal cell signaling. Could be an adapter protein linking ion channel to the subsynaptic cytoskeleton. May induce enrichment of PSD-95/SAP90 at the plasma membrane (By similarity).</text>
</comment>
<comment type="subunit">
    <text evidence="1">Interacts with DLG1 and DLG4/PSD-95.</text>
</comment>
<comment type="subcellular location">
    <subcellularLocation>
        <location evidence="1">Membrane</location>
        <topology evidence="1">Peripheral membrane protein</topology>
    </subcellularLocation>
</comment>
<comment type="alternative products">
    <event type="alternative splicing"/>
    <isoform>
        <id>B1AZP2-1</id>
        <name>1</name>
        <sequence type="displayed"/>
    </isoform>
    <isoform>
        <id>B1AZP2-2</id>
        <name>2</name>
        <sequence type="described" ref="VSP_034909"/>
    </isoform>
    <isoform>
        <id>B1AZP2-3</id>
        <name>3</name>
        <sequence type="described" ref="VSP_034907 VSP_034908"/>
    </isoform>
</comment>
<comment type="similarity">
    <text evidence="6">Belongs to the SAPAP family.</text>
</comment>
<comment type="sequence caution" evidence="6">
    <conflict type="miscellaneous discrepancy">
        <sequence resource="EMBL-CDS" id="BAC65690"/>
    </conflict>
    <text>Intron retention.</text>
</comment>
<proteinExistence type="evidence at protein level"/>
<reference key="1">
    <citation type="journal article" date="2004" name="J. Comp. Neurol.">
        <title>Differential mRNA expression and protein localization of the SAP90/PSD-95-associated proteins (SAPAPs) in the nervous system of the mouse.</title>
        <authorList>
            <person name="Welch J.M."/>
            <person name="Wang D."/>
            <person name="Feng G."/>
        </authorList>
    </citation>
    <scope>NUCLEOTIDE SEQUENCE [MRNA] (ISOFORM 1)</scope>
    <source>
        <strain>ICR</strain>
    </source>
</reference>
<reference key="2">
    <citation type="journal article" date="2003" name="DNA Res.">
        <title>Prediction of the coding sequences of mouse homologues of KIAA gene: II. The complete nucleotide sequences of 400 mouse KIAA-homologous cDNAs identified by screening of terminal sequences of cDNA clones randomly sampled from size-fractionated libraries.</title>
        <authorList>
            <person name="Okazaki N."/>
            <person name="Kikuno R."/>
            <person name="Ohara R."/>
            <person name="Inamoto S."/>
            <person name="Aizawa H."/>
            <person name="Yuasa S."/>
            <person name="Nakajima D."/>
            <person name="Nagase T."/>
            <person name="Ohara O."/>
            <person name="Koga H."/>
        </authorList>
    </citation>
    <scope>NUCLEOTIDE SEQUENCE [LARGE SCALE MRNA] (ISOFORM 2)</scope>
    <source>
        <tissue>Brain</tissue>
    </source>
</reference>
<reference key="3">
    <citation type="journal article" date="2009" name="PLoS Biol.">
        <title>Lineage-specific biology revealed by a finished genome assembly of the mouse.</title>
        <authorList>
            <person name="Church D.M."/>
            <person name="Goodstadt L."/>
            <person name="Hillier L.W."/>
            <person name="Zody M.C."/>
            <person name="Goldstein S."/>
            <person name="She X."/>
            <person name="Bult C.J."/>
            <person name="Agarwala R."/>
            <person name="Cherry J.L."/>
            <person name="DiCuccio M."/>
            <person name="Hlavina W."/>
            <person name="Kapustin Y."/>
            <person name="Meric P."/>
            <person name="Maglott D."/>
            <person name="Birtle Z."/>
            <person name="Marques A.C."/>
            <person name="Graves T."/>
            <person name="Zhou S."/>
            <person name="Teague B."/>
            <person name="Potamousis K."/>
            <person name="Churas C."/>
            <person name="Place M."/>
            <person name="Herschleb J."/>
            <person name="Runnheim R."/>
            <person name="Forrest D."/>
            <person name="Amos-Landgraf J."/>
            <person name="Schwartz D.C."/>
            <person name="Cheng Z."/>
            <person name="Lindblad-Toh K."/>
            <person name="Eichler E.E."/>
            <person name="Ponting C.P."/>
        </authorList>
    </citation>
    <scope>NUCLEOTIDE SEQUENCE [LARGE SCALE GENOMIC DNA]</scope>
    <source>
        <strain>C57BL/6J</strain>
    </source>
</reference>
<reference key="4">
    <citation type="journal article" date="2004" name="Genome Res.">
        <title>The status, quality, and expansion of the NIH full-length cDNA project: the Mammalian Gene Collection (MGC).</title>
        <authorList>
            <consortium name="The MGC Project Team"/>
        </authorList>
    </citation>
    <scope>NUCLEOTIDE SEQUENCE [LARGE SCALE MRNA] (ISOFORMS 2 AND 3)</scope>
    <source>
        <strain>C57BL/6J</strain>
        <strain>FVB/N</strain>
        <strain>FVB/N-3</strain>
        <tissue>Brain</tissue>
        <tissue>Mammary tumor</tissue>
    </source>
</reference>
<reference key="5">
    <citation type="journal article" date="2004" name="Mol. Cell. Proteomics">
        <title>Phosphoproteomic analysis of the developing mouse brain.</title>
        <authorList>
            <person name="Ballif B.A."/>
            <person name="Villen J."/>
            <person name="Beausoleil S.A."/>
            <person name="Schwartz D."/>
            <person name="Gygi S.P."/>
        </authorList>
    </citation>
    <scope>IDENTIFICATION BY MASS SPECTROMETRY [LARGE SCALE ANALYSIS]</scope>
    <source>
        <tissue>Embryonic brain</tissue>
    </source>
</reference>
<reference key="6">
    <citation type="journal article" date="2006" name="Mol. Cell. Proteomics">
        <title>Comprehensive identification of phosphorylation sites in postsynaptic density preparations.</title>
        <authorList>
            <person name="Trinidad J.C."/>
            <person name="Specht C.G."/>
            <person name="Thalhammer A."/>
            <person name="Schoepfer R."/>
            <person name="Burlingame A.L."/>
        </authorList>
    </citation>
    <scope>PHOSPHORYLATION [LARGE SCALE ANALYSIS] AT SER-377</scope>
    <scope>IDENTIFICATION BY MASS SPECTROMETRY [LARGE SCALE ANALYSIS]</scope>
    <source>
        <tissue>Brain</tissue>
    </source>
</reference>
<reference key="7">
    <citation type="journal article" date="2007" name="Mol. Cell. Proteomics">
        <title>Qualitative and quantitative analyses of protein phosphorylation in naive and stimulated mouse synaptosomal preparations.</title>
        <authorList>
            <person name="Munton R.P."/>
            <person name="Tweedie-Cullen R."/>
            <person name="Livingstone-Zatchej M."/>
            <person name="Weinandy F."/>
            <person name="Waidelich M."/>
            <person name="Longo D."/>
            <person name="Gehrig P."/>
            <person name="Potthast F."/>
            <person name="Rutishauser D."/>
            <person name="Gerrits B."/>
            <person name="Panse C."/>
            <person name="Schlapbach R."/>
            <person name="Mansuy I.M."/>
        </authorList>
    </citation>
    <scope>IDENTIFICATION BY MASS SPECTROMETRY [LARGE SCALE ANALYSIS]</scope>
    <source>
        <tissue>Brain cortex</tissue>
    </source>
</reference>
<reference key="8">
    <citation type="journal article" date="2010" name="Cell">
        <title>A tissue-specific atlas of mouse protein phosphorylation and expression.</title>
        <authorList>
            <person name="Huttlin E.L."/>
            <person name="Jedrychowski M.P."/>
            <person name="Elias J.E."/>
            <person name="Goswami T."/>
            <person name="Rad R."/>
            <person name="Beausoleil S.A."/>
            <person name="Villen J."/>
            <person name="Haas W."/>
            <person name="Sowa M.E."/>
            <person name="Gygi S.P."/>
        </authorList>
    </citation>
    <scope>PHOSPHORYLATION [LARGE SCALE ANALYSIS] AT SER-207; SER-384; SER-388; SER-405; SER-415; SER-421; SER-580; SER-581; SER-609; SER-611; SER-665; SER-744; THR-915 AND SER-973</scope>
    <scope>IDENTIFICATION BY MASS SPECTROMETRY [LARGE SCALE ANALYSIS]</scope>
    <source>
        <tissue>Brain</tissue>
        <tissue>Heart</tissue>
        <tissue>Kidney</tissue>
        <tissue>Lung</tissue>
        <tissue>Pancreas</tissue>
        <tissue>Spleen</tissue>
        <tissue>Testis</tissue>
    </source>
</reference>
<reference key="9">
    <citation type="journal article" date="2014" name="Mol. Cell. Proteomics">
        <title>Immunoaffinity enrichment and mass spectrometry analysis of protein methylation.</title>
        <authorList>
            <person name="Guo A."/>
            <person name="Gu H."/>
            <person name="Zhou J."/>
            <person name="Mulhern D."/>
            <person name="Wang Y."/>
            <person name="Lee K.A."/>
            <person name="Yang V."/>
            <person name="Aguiar M."/>
            <person name="Kornhauser J."/>
            <person name="Jia X."/>
            <person name="Ren J."/>
            <person name="Beausoleil S.A."/>
            <person name="Silva J.C."/>
            <person name="Vemulapalli V."/>
            <person name="Bedford M.T."/>
            <person name="Comb M.J."/>
        </authorList>
    </citation>
    <scope>METHYLATION [LARGE SCALE ANALYSIS] AT ARG-290</scope>
    <scope>IDENTIFICATION BY MASS SPECTROMETRY [LARGE SCALE ANALYSIS]</scope>
    <source>
        <tissue>Brain</tissue>
    </source>
</reference>
<accession>B1AZP2</accession>
<accession>B1AZP3</accession>
<accession>B7ZNS1</accession>
<accession>Q3KQQ8</accession>
<accession>Q6PD44</accession>
<accession>Q6XBF1</accession>
<accession>Q80TN3</accession>
<accession>Q8R3U9</accession>